<keyword id="KW-0963">Cytoplasm</keyword>
<keyword id="KW-0520">NAD</keyword>
<keyword id="KW-0521">NADP</keyword>
<keyword id="KW-0560">Oxidoreductase</keyword>
<protein>
    <recommendedName>
        <fullName evidence="1">Glyoxylate/hydroxypyruvate reductase A</fullName>
        <ecNumber evidence="1">1.1.1.79</ecNumber>
        <ecNumber evidence="1">1.1.1.81</ecNumber>
    </recommendedName>
    <alternativeName>
        <fullName evidence="1">2-ketoacid reductase</fullName>
    </alternativeName>
</protein>
<dbReference type="EC" id="1.1.1.79" evidence="1"/>
<dbReference type="EC" id="1.1.1.81" evidence="1"/>
<dbReference type="EMBL" id="CP000247">
    <property type="protein sequence ID" value="ABG69038.1"/>
    <property type="molecule type" value="Genomic_DNA"/>
</dbReference>
<dbReference type="RefSeq" id="WP_000351280.1">
    <property type="nucleotide sequence ID" value="NC_008253.1"/>
</dbReference>
<dbReference type="SMR" id="Q0TJ41"/>
<dbReference type="KEGG" id="ecp:ECP_1025"/>
<dbReference type="HOGENOM" id="CLU_019796_1_0_6"/>
<dbReference type="Proteomes" id="UP000009182">
    <property type="component" value="Chromosome"/>
</dbReference>
<dbReference type="GO" id="GO:0005829">
    <property type="term" value="C:cytosol"/>
    <property type="evidence" value="ECO:0007669"/>
    <property type="project" value="UniProtKB-ARBA"/>
</dbReference>
<dbReference type="GO" id="GO:0030267">
    <property type="term" value="F:glyoxylate reductase (NADPH) activity"/>
    <property type="evidence" value="ECO:0007669"/>
    <property type="project" value="UniProtKB-UniRule"/>
</dbReference>
<dbReference type="GO" id="GO:0008465">
    <property type="term" value="F:hydroxypyruvate reductase (NADH) activity"/>
    <property type="evidence" value="ECO:0007669"/>
    <property type="project" value="RHEA"/>
</dbReference>
<dbReference type="GO" id="GO:0120509">
    <property type="term" value="F:hydroxypyruvate reductase (NADPH) activity"/>
    <property type="evidence" value="ECO:0007669"/>
    <property type="project" value="RHEA"/>
</dbReference>
<dbReference type="GO" id="GO:0051287">
    <property type="term" value="F:NAD binding"/>
    <property type="evidence" value="ECO:0007669"/>
    <property type="project" value="InterPro"/>
</dbReference>
<dbReference type="CDD" id="cd12164">
    <property type="entry name" value="GDH_like_2"/>
    <property type="match status" value="1"/>
</dbReference>
<dbReference type="FunFam" id="3.40.50.720:FF:000110">
    <property type="entry name" value="Glyoxylate/hydroxypyruvate reductase A"/>
    <property type="match status" value="1"/>
</dbReference>
<dbReference type="Gene3D" id="3.40.50.720">
    <property type="entry name" value="NAD(P)-binding Rossmann-like Domain"/>
    <property type="match status" value="2"/>
</dbReference>
<dbReference type="HAMAP" id="MF_01666">
    <property type="entry name" value="2_Hacid_dh_C_GhrA"/>
    <property type="match status" value="1"/>
</dbReference>
<dbReference type="InterPro" id="IPR029753">
    <property type="entry name" value="D-isomer_DH_CS"/>
</dbReference>
<dbReference type="InterPro" id="IPR006140">
    <property type="entry name" value="D-isomer_DH_NAD-bd"/>
</dbReference>
<dbReference type="InterPro" id="IPR023514">
    <property type="entry name" value="GhrA_Enterobacterales"/>
</dbReference>
<dbReference type="InterPro" id="IPR036291">
    <property type="entry name" value="NAD(P)-bd_dom_sf"/>
</dbReference>
<dbReference type="NCBIfam" id="NF012013">
    <property type="entry name" value="PRK15469.1"/>
    <property type="match status" value="1"/>
</dbReference>
<dbReference type="PANTHER" id="PTHR43333">
    <property type="entry name" value="2-HACID_DH_C DOMAIN-CONTAINING PROTEIN"/>
    <property type="match status" value="1"/>
</dbReference>
<dbReference type="PANTHER" id="PTHR43333:SF1">
    <property type="entry name" value="D-ISOMER SPECIFIC 2-HYDROXYACID DEHYDROGENASE NAD-BINDING DOMAIN-CONTAINING PROTEIN"/>
    <property type="match status" value="1"/>
</dbReference>
<dbReference type="Pfam" id="PF02826">
    <property type="entry name" value="2-Hacid_dh_C"/>
    <property type="match status" value="1"/>
</dbReference>
<dbReference type="SUPFAM" id="SSF51735">
    <property type="entry name" value="NAD(P)-binding Rossmann-fold domains"/>
    <property type="match status" value="1"/>
</dbReference>
<dbReference type="PROSITE" id="PS00671">
    <property type="entry name" value="D_2_HYDROXYACID_DH_3"/>
    <property type="match status" value="1"/>
</dbReference>
<reference key="1">
    <citation type="journal article" date="2006" name="Mol. Microbiol.">
        <title>Role of pathogenicity island-associated integrases in the genome plasticity of uropathogenic Escherichia coli strain 536.</title>
        <authorList>
            <person name="Hochhut B."/>
            <person name="Wilde C."/>
            <person name="Balling G."/>
            <person name="Middendorf B."/>
            <person name="Dobrindt U."/>
            <person name="Brzuszkiewicz E."/>
            <person name="Gottschalk G."/>
            <person name="Carniel E."/>
            <person name="Hacker J."/>
        </authorList>
    </citation>
    <scope>NUCLEOTIDE SEQUENCE [LARGE SCALE GENOMIC DNA]</scope>
    <source>
        <strain>536 / UPEC</strain>
    </source>
</reference>
<feature type="chain" id="PRO_0000348358" description="Glyoxylate/hydroxypyruvate reductase A">
    <location>
        <begin position="1"/>
        <end position="312"/>
    </location>
</feature>
<feature type="active site" evidence="1">
    <location>
        <position position="227"/>
    </location>
</feature>
<feature type="active site" description="Proton donor" evidence="1">
    <location>
        <position position="275"/>
    </location>
</feature>
<gene>
    <name evidence="1" type="primary">ghrA</name>
    <name type="ordered locus">ECP_1025</name>
</gene>
<proteinExistence type="inferred from homology"/>
<name>GHRA_ECOL5</name>
<sequence length="312" mass="35354">MDIIFYHPTFDTQWWIEALHKAIPQTRVRAWKSGDNESADYALVWHPPVEMLAGRDLKAVFALGAGVDSILSKLQAHPEMLKPSVPLFRLEDTGMGEQMQEYAVSQVLHWFRRFDDYRIQQNSSHWQPLPEYHREDFTIGILGAGVLGSKVAQSLQTWRFPLRCWSRTRKSWPGVQSFAGREELSAFLSQCRVLINLLPNTPETVGIINQQLLEKLPDGAYLLNLARGVHVVEDDLLAALDSGKVKGAMLDVFNREPLPPESPLWQHPRVTITPHVAAITRPAEAVDYISRTIAQVEKGERVCGQVDRARGY</sequence>
<organism>
    <name type="scientific">Escherichia coli O6:K15:H31 (strain 536 / UPEC)</name>
    <dbReference type="NCBI Taxonomy" id="362663"/>
    <lineage>
        <taxon>Bacteria</taxon>
        <taxon>Pseudomonadati</taxon>
        <taxon>Pseudomonadota</taxon>
        <taxon>Gammaproteobacteria</taxon>
        <taxon>Enterobacterales</taxon>
        <taxon>Enterobacteriaceae</taxon>
        <taxon>Escherichia</taxon>
    </lineage>
</organism>
<evidence type="ECO:0000255" key="1">
    <source>
        <dbReference type="HAMAP-Rule" id="MF_01666"/>
    </source>
</evidence>
<comment type="function">
    <text evidence="1">Catalyzes the NADPH-dependent reduction of glyoxylate and hydroxypyruvate into glycolate and glycerate, respectively.</text>
</comment>
<comment type="catalytic activity">
    <reaction evidence="1">
        <text>glycolate + NADP(+) = glyoxylate + NADPH + H(+)</text>
        <dbReference type="Rhea" id="RHEA:10992"/>
        <dbReference type="ChEBI" id="CHEBI:15378"/>
        <dbReference type="ChEBI" id="CHEBI:29805"/>
        <dbReference type="ChEBI" id="CHEBI:36655"/>
        <dbReference type="ChEBI" id="CHEBI:57783"/>
        <dbReference type="ChEBI" id="CHEBI:58349"/>
        <dbReference type="EC" id="1.1.1.79"/>
    </reaction>
</comment>
<comment type="catalytic activity">
    <reaction evidence="1">
        <text>(R)-glycerate + NAD(+) = 3-hydroxypyruvate + NADH + H(+)</text>
        <dbReference type="Rhea" id="RHEA:17905"/>
        <dbReference type="ChEBI" id="CHEBI:15378"/>
        <dbReference type="ChEBI" id="CHEBI:16659"/>
        <dbReference type="ChEBI" id="CHEBI:17180"/>
        <dbReference type="ChEBI" id="CHEBI:57540"/>
        <dbReference type="ChEBI" id="CHEBI:57945"/>
        <dbReference type="EC" id="1.1.1.81"/>
    </reaction>
</comment>
<comment type="catalytic activity">
    <reaction evidence="1">
        <text>(R)-glycerate + NADP(+) = 3-hydroxypyruvate + NADPH + H(+)</text>
        <dbReference type="Rhea" id="RHEA:18657"/>
        <dbReference type="ChEBI" id="CHEBI:15378"/>
        <dbReference type="ChEBI" id="CHEBI:16659"/>
        <dbReference type="ChEBI" id="CHEBI:17180"/>
        <dbReference type="ChEBI" id="CHEBI:57783"/>
        <dbReference type="ChEBI" id="CHEBI:58349"/>
        <dbReference type="EC" id="1.1.1.81"/>
    </reaction>
</comment>
<comment type="subcellular location">
    <subcellularLocation>
        <location evidence="1">Cytoplasm</location>
    </subcellularLocation>
</comment>
<comment type="similarity">
    <text evidence="1">Belongs to the D-isomer specific 2-hydroxyacid dehydrogenase family. GhrA subfamily.</text>
</comment>
<accession>Q0TJ41</accession>